<feature type="chain" id="PRO_0000192059" description="Surface presentation of antigens protein SpaR">
    <location>
        <begin position="1"/>
        <end position="263"/>
    </location>
</feature>
<feature type="transmembrane region" description="Helical" evidence="1">
    <location>
        <begin position="12"/>
        <end position="32"/>
    </location>
</feature>
<feature type="transmembrane region" description="Helical" evidence="1">
    <location>
        <begin position="46"/>
        <end position="66"/>
    </location>
</feature>
<feature type="transmembrane region" description="Helical" evidence="1">
    <location>
        <begin position="82"/>
        <end position="102"/>
    </location>
</feature>
<feature type="transmembrane region" description="Helical" evidence="1">
    <location>
        <begin position="127"/>
        <end position="147"/>
    </location>
</feature>
<feature type="transmembrane region" description="Helical" evidence="1">
    <location>
        <begin position="182"/>
        <end position="202"/>
    </location>
</feature>
<feature type="transmembrane region" description="Helical" evidence="1">
    <location>
        <begin position="211"/>
        <end position="231"/>
    </location>
</feature>
<sequence length="263" mass="28487">MFYALYFEIHHLVASAALGFARVAPIFFFLPFLNSGVLSGAPRNAIIILVALGVWPHALNEAPPFLSVAMIPLVLQEAAVGVMLGCLLSWPFWVMHALGCIIDNQRGATLSSSIDPANGIDTSEMANFLNMFAAVVYLQNGGLVTMVDVLNKSYQLCDPMNECTPSLPPLLTFINQVAQNALVLASPVVLVLLLSEVFLGLLSRFAPQMNAFAISLTVKSGIAVLIMLLYFSPVLPDNVLRLSFQATGLSSWFYERGATHVLE</sequence>
<proteinExistence type="evidence at protein level"/>
<comment type="function">
    <text>Involved in a secretory pathway responsible for the surface presentation of determinants needed for the entry of Salmonella species into mammalian cells.</text>
</comment>
<comment type="interaction">
    <interactant intactId="EBI-15880134">
        <id>P40701</id>
    </interactant>
    <interactant intactId="EBI-15880102">
        <id>P40700</id>
        <label>spaP</label>
    </interactant>
    <organismsDiffer>false</organismsDiffer>
    <experiments>2</experiments>
</comment>
<comment type="subcellular location">
    <subcellularLocation>
        <location evidence="2">Cell membrane</location>
        <topology evidence="2">Multi-pass membrane protein</topology>
    </subcellularLocation>
</comment>
<comment type="similarity">
    <text evidence="2">Belongs to the FliR/MopE/SpaR family.</text>
</comment>
<name>SPAR_SALTY</name>
<evidence type="ECO:0000255" key="1"/>
<evidence type="ECO:0000305" key="2"/>
<reference key="1">
    <citation type="journal article" date="1993" name="EMBO J.">
        <title>Cognate gene clusters govern invasion of host epithelial cells by Salmonella typhimurium and Shigella flexneri.</title>
        <authorList>
            <person name="Groisman E.A."/>
            <person name="Ochman H."/>
        </authorList>
    </citation>
    <scope>NUCLEOTIDE SEQUENCE [GENOMIC DNA]</scope>
</reference>
<reference key="2">
    <citation type="journal article" date="2001" name="Nature">
        <title>Complete genome sequence of Salmonella enterica serovar Typhimurium LT2.</title>
        <authorList>
            <person name="McClelland M."/>
            <person name="Sanderson K.E."/>
            <person name="Spieth J."/>
            <person name="Clifton S.W."/>
            <person name="Latreille P."/>
            <person name="Courtney L."/>
            <person name="Porwollik S."/>
            <person name="Ali J."/>
            <person name="Dante M."/>
            <person name="Du F."/>
            <person name="Hou S."/>
            <person name="Layman D."/>
            <person name="Leonard S."/>
            <person name="Nguyen C."/>
            <person name="Scott K."/>
            <person name="Holmes A."/>
            <person name="Grewal N."/>
            <person name="Mulvaney E."/>
            <person name="Ryan E."/>
            <person name="Sun H."/>
            <person name="Florea L."/>
            <person name="Miller W."/>
            <person name="Stoneking T."/>
            <person name="Nhan M."/>
            <person name="Waterston R."/>
            <person name="Wilson R.K."/>
        </authorList>
    </citation>
    <scope>NUCLEOTIDE SEQUENCE [LARGE SCALE GENOMIC DNA]</scope>
    <source>
        <strain>LT2 / SGSC1412 / ATCC 700720</strain>
    </source>
</reference>
<gene>
    <name type="primary">spaR</name>
    <name type="ordered locus">STM2888</name>
</gene>
<dbReference type="EMBL" id="X73525">
    <property type="protein sequence ID" value="CAA51926.1"/>
    <property type="molecule type" value="Genomic_DNA"/>
</dbReference>
<dbReference type="EMBL" id="AE006468">
    <property type="protein sequence ID" value="AAL21768.1"/>
    <property type="molecule type" value="Genomic_DNA"/>
</dbReference>
<dbReference type="PIR" id="S37309">
    <property type="entry name" value="S37309"/>
</dbReference>
<dbReference type="RefSeq" id="NP_461809.1">
    <property type="nucleotide sequence ID" value="NC_003197.2"/>
</dbReference>
<dbReference type="RefSeq" id="WP_000498965.1">
    <property type="nucleotide sequence ID" value="NC_003197.2"/>
</dbReference>
<dbReference type="PDB" id="6PEM">
    <property type="method" value="EM"/>
    <property type="resolution" value="3.50 A"/>
    <property type="chains" value="5=1-263"/>
</dbReference>
<dbReference type="PDB" id="6PEP">
    <property type="method" value="EM"/>
    <property type="resolution" value="3.80 A"/>
    <property type="chains" value="5=1-263"/>
</dbReference>
<dbReference type="PDB" id="6Q14">
    <property type="method" value="EM"/>
    <property type="resolution" value="3.80 A"/>
    <property type="chains" value="5=1-263"/>
</dbReference>
<dbReference type="PDB" id="6Q15">
    <property type="method" value="EM"/>
    <property type="resolution" value="5.15 A"/>
    <property type="chains" value="5=1-263"/>
</dbReference>
<dbReference type="PDB" id="6Q16">
    <property type="method" value="EM"/>
    <property type="resolution" value="4.10 A"/>
    <property type="chains" value="5=1-263"/>
</dbReference>
<dbReference type="PDB" id="7AGX">
    <property type="method" value="EM"/>
    <property type="resolution" value="3.60 A"/>
    <property type="chains" value="1F=1-263"/>
</dbReference>
<dbReference type="PDB" id="7AH9">
    <property type="method" value="EM"/>
    <property type="resolution" value="3.30 A"/>
    <property type="chains" value="1F=1-263"/>
</dbReference>
<dbReference type="PDB" id="7AHI">
    <property type="method" value="EM"/>
    <property type="resolution" value="3.30 A"/>
    <property type="chains" value="1F=1-263"/>
</dbReference>
<dbReference type="PDBsum" id="6PEM"/>
<dbReference type="PDBsum" id="6PEP"/>
<dbReference type="PDBsum" id="6Q14"/>
<dbReference type="PDBsum" id="6Q15"/>
<dbReference type="PDBsum" id="6Q16"/>
<dbReference type="PDBsum" id="7AGX"/>
<dbReference type="PDBsum" id="7AH9"/>
<dbReference type="PDBsum" id="7AHI"/>
<dbReference type="EMDB" id="EMD-11780"/>
<dbReference type="EMDB" id="EMD-11781"/>
<dbReference type="EMDB" id="EMD-20556"/>
<dbReference type="SMR" id="P40701"/>
<dbReference type="DIP" id="DIP-59559N"/>
<dbReference type="IntAct" id="P40701">
    <property type="interactions" value="3"/>
</dbReference>
<dbReference type="STRING" id="99287.STM2888"/>
<dbReference type="TCDB" id="3.A.6.1.3">
    <property type="family name" value="the type iii (virulence-related) secretory pathway (iiisp) family"/>
</dbReference>
<dbReference type="PaxDb" id="99287-STM2888"/>
<dbReference type="GeneID" id="1254411"/>
<dbReference type="KEGG" id="stm:STM2888"/>
<dbReference type="PATRIC" id="fig|99287.12.peg.3044"/>
<dbReference type="HOGENOM" id="CLU_063626_0_3_6"/>
<dbReference type="OMA" id="LYSRFCP"/>
<dbReference type="PhylomeDB" id="P40701"/>
<dbReference type="BioCyc" id="SENT99287:STM2888-MONOMER"/>
<dbReference type="Proteomes" id="UP000001014">
    <property type="component" value="Chromosome"/>
</dbReference>
<dbReference type="GO" id="GO:0005886">
    <property type="term" value="C:plasma membrane"/>
    <property type="evidence" value="ECO:0000318"/>
    <property type="project" value="GO_Central"/>
</dbReference>
<dbReference type="GO" id="GO:0006605">
    <property type="term" value="P:protein targeting"/>
    <property type="evidence" value="ECO:0007669"/>
    <property type="project" value="InterPro"/>
</dbReference>
<dbReference type="InterPro" id="IPR002010">
    <property type="entry name" value="T3SS_IM_R"/>
</dbReference>
<dbReference type="InterPro" id="IPR006304">
    <property type="entry name" value="T3SS_SpaR/YscT"/>
</dbReference>
<dbReference type="NCBIfam" id="TIGR01401">
    <property type="entry name" value="fliR_like_III"/>
    <property type="match status" value="1"/>
</dbReference>
<dbReference type="PANTHER" id="PTHR30065">
    <property type="entry name" value="FLAGELLAR BIOSYNTHETIC PROTEIN FLIR"/>
    <property type="match status" value="1"/>
</dbReference>
<dbReference type="PANTHER" id="PTHR30065:SF1">
    <property type="entry name" value="SURFACE PRESENTATION OF ANTIGENS PROTEIN SPAR"/>
    <property type="match status" value="1"/>
</dbReference>
<dbReference type="Pfam" id="PF01311">
    <property type="entry name" value="Bac_export_1"/>
    <property type="match status" value="1"/>
</dbReference>
<dbReference type="PRINTS" id="PR00953">
    <property type="entry name" value="TYPE3IMRPROT"/>
</dbReference>
<protein>
    <recommendedName>
        <fullName>Surface presentation of antigens protein SpaR</fullName>
    </recommendedName>
</protein>
<organism>
    <name type="scientific">Salmonella typhimurium (strain LT2 / SGSC1412 / ATCC 700720)</name>
    <dbReference type="NCBI Taxonomy" id="99287"/>
    <lineage>
        <taxon>Bacteria</taxon>
        <taxon>Pseudomonadati</taxon>
        <taxon>Pseudomonadota</taxon>
        <taxon>Gammaproteobacteria</taxon>
        <taxon>Enterobacterales</taxon>
        <taxon>Enterobacteriaceae</taxon>
        <taxon>Salmonella</taxon>
    </lineage>
</organism>
<accession>P40701</accession>
<keyword id="KW-0002">3D-structure</keyword>
<keyword id="KW-1003">Cell membrane</keyword>
<keyword id="KW-0472">Membrane</keyword>
<keyword id="KW-1185">Reference proteome</keyword>
<keyword id="KW-0812">Transmembrane</keyword>
<keyword id="KW-1133">Transmembrane helix</keyword>
<keyword id="KW-0843">Virulence</keyword>